<dbReference type="EMBL" id="AL111168">
    <property type="protein sequence ID" value="CAL34863.1"/>
    <property type="molecule type" value="Genomic_DNA"/>
</dbReference>
<dbReference type="PIR" id="A81344">
    <property type="entry name" value="A81344"/>
</dbReference>
<dbReference type="RefSeq" id="WP_002852367.1">
    <property type="nucleotide sequence ID" value="NZ_SZUC01000002.1"/>
</dbReference>
<dbReference type="RefSeq" id="YP_002344144.1">
    <property type="nucleotide sequence ID" value="NC_002163.1"/>
</dbReference>
<dbReference type="PDB" id="8ZAH">
    <property type="method" value="X-ray"/>
    <property type="resolution" value="2.10 A"/>
    <property type="chains" value="A/B=1-268"/>
</dbReference>
<dbReference type="PDB" id="8ZAK">
    <property type="method" value="X-ray"/>
    <property type="resolution" value="2.40 A"/>
    <property type="chains" value="A/B=1-268"/>
</dbReference>
<dbReference type="PDBsum" id="8ZAH"/>
<dbReference type="PDBsum" id="8ZAK"/>
<dbReference type="SMR" id="Q9PPI1"/>
<dbReference type="STRING" id="192222.Cj0726c"/>
<dbReference type="PaxDb" id="192222-Cj0726c"/>
<dbReference type="EnsemblBacteria" id="CAL34863">
    <property type="protein sequence ID" value="CAL34863"/>
    <property type="gene ID" value="Cj0726c"/>
</dbReference>
<dbReference type="GeneID" id="905044"/>
<dbReference type="KEGG" id="cje:Cj0726c"/>
<dbReference type="PATRIC" id="fig|192222.6.peg.718"/>
<dbReference type="eggNOG" id="COG0598">
    <property type="taxonomic scope" value="Bacteria"/>
</dbReference>
<dbReference type="HOGENOM" id="CLU_007127_5_0_7"/>
<dbReference type="OrthoDB" id="9803416at2"/>
<dbReference type="Proteomes" id="UP000000799">
    <property type="component" value="Chromosome"/>
</dbReference>
<dbReference type="GO" id="GO:0005886">
    <property type="term" value="C:plasma membrane"/>
    <property type="evidence" value="ECO:0007669"/>
    <property type="project" value="UniProtKB-SubCell"/>
</dbReference>
<dbReference type="GO" id="GO:0015087">
    <property type="term" value="F:cobalt ion transmembrane transporter activity"/>
    <property type="evidence" value="ECO:0007669"/>
    <property type="project" value="InterPro"/>
</dbReference>
<dbReference type="GO" id="GO:0015095">
    <property type="term" value="F:magnesium ion transmembrane transporter activity"/>
    <property type="evidence" value="ECO:0007669"/>
    <property type="project" value="InterPro"/>
</dbReference>
<dbReference type="GO" id="GO:0015099">
    <property type="term" value="F:nickel cation transmembrane transporter activity"/>
    <property type="evidence" value="ECO:0007669"/>
    <property type="project" value="TreeGrafter"/>
</dbReference>
<dbReference type="FunFam" id="1.20.58.340:FF:000001">
    <property type="entry name" value="Magnesium transport protein CorA"/>
    <property type="match status" value="1"/>
</dbReference>
<dbReference type="Gene3D" id="3.30.460.20">
    <property type="entry name" value="CorA soluble domain-like"/>
    <property type="match status" value="1"/>
</dbReference>
<dbReference type="Gene3D" id="1.20.58.340">
    <property type="entry name" value="Magnesium transport protein CorA, transmembrane region"/>
    <property type="match status" value="2"/>
</dbReference>
<dbReference type="InterPro" id="IPR045861">
    <property type="entry name" value="CorA_cytoplasmic_dom"/>
</dbReference>
<dbReference type="InterPro" id="IPR050829">
    <property type="entry name" value="CorA_MIT"/>
</dbReference>
<dbReference type="InterPro" id="IPR045863">
    <property type="entry name" value="CorA_TM1_TM2"/>
</dbReference>
<dbReference type="InterPro" id="IPR004488">
    <property type="entry name" value="Mg/Co-transport_prot_CorA"/>
</dbReference>
<dbReference type="InterPro" id="IPR002523">
    <property type="entry name" value="MgTranspt_CorA/ZnTranspt_ZntB"/>
</dbReference>
<dbReference type="NCBIfam" id="TIGR00383">
    <property type="entry name" value="corA"/>
    <property type="match status" value="1"/>
</dbReference>
<dbReference type="PANTHER" id="PTHR47685">
    <property type="entry name" value="MAGNESIUM TRANSPORT PROTEIN CORA"/>
    <property type="match status" value="1"/>
</dbReference>
<dbReference type="PANTHER" id="PTHR47685:SF1">
    <property type="entry name" value="MAGNESIUM TRANSPORT PROTEIN CORA"/>
    <property type="match status" value="1"/>
</dbReference>
<dbReference type="Pfam" id="PF01544">
    <property type="entry name" value="CorA"/>
    <property type="match status" value="1"/>
</dbReference>
<dbReference type="SUPFAM" id="SSF143865">
    <property type="entry name" value="CorA soluble domain-like"/>
    <property type="match status" value="1"/>
</dbReference>
<dbReference type="SUPFAM" id="SSF144083">
    <property type="entry name" value="Magnesium transport protein CorA, transmembrane region"/>
    <property type="match status" value="1"/>
</dbReference>
<sequence>MLYIYIKTQNALVQRINFNLDSQELPQNILWIDLLHPSAAEIAFISSEFNLEFPTKEEREEIELSAKYWEDNATITINAHFLVRDLKSDEEDRNLIKLRTEIVTFATAKNILFTIRYNEFSTFEEIQARILASPKNFEDGFDIIDKMFEVRVEKDADLLEWIDKEARRLRTSVLEKKDEYSYDEMLKDISSLQELNMRVRDSLFDKRRAMTSLLKSDKIDKDIKQNLTIVLKDLNSLVEFSVSQLNILDNIQTILASQINIEQNKVIKIFTVATVAMMPPTLIGTVYGMNFKFMPELELHYAYPIVLGVMVISIILPLVVFKKKGWL</sequence>
<comment type="function">
    <text evidence="1 3">Mediates influx of magnesium ions (By similarity). Alternates between open and closed states. Activated by low cytoplasmic Mg(2+) levels. Inactive when cytoplasmic Mg(2+) levels are high (By similarity).</text>
</comment>
<comment type="catalytic activity">
    <reaction evidence="1">
        <text>Mg(2+)(in) = Mg(2+)(out)</text>
        <dbReference type="Rhea" id="RHEA:29827"/>
        <dbReference type="ChEBI" id="CHEBI:18420"/>
    </reaction>
</comment>
<comment type="subunit">
    <text evidence="3">Homopentamer. In the absence of Mg(2+), interactions between subunits are weakened, and dimers, trimers and tetramers can be observed in vitro (By similarity).</text>
</comment>
<comment type="subcellular location">
    <subcellularLocation>
        <location evidence="2">Cell inner membrane</location>
        <topology evidence="3">Multi-pass membrane protein</topology>
    </subcellularLocation>
</comment>
<comment type="domain">
    <text evidence="3">The central ion permeation pathway is formed by the first transmembrane domain from each of the five subunits. Mg(2+) binding strengthens interactions between subunits and leads to the formation of a symmetrical homopentamer surrounding a closed ion permeation pathway. Low Mg(2+) concentrations trigger both a conformation change within each subunit and a loosening of the interactions between subunits. This results in an open ion conduction pathway. In addition, this results in a less symmetrical shape of the whole complex.</text>
</comment>
<comment type="similarity">
    <text evidence="5">Belongs to the CorA metal ion transporter (MIT) (TC 1.A.35) family.</text>
</comment>
<keyword id="KW-0002">3D-structure</keyword>
<keyword id="KW-0997">Cell inner membrane</keyword>
<keyword id="KW-1003">Cell membrane</keyword>
<keyword id="KW-0406">Ion transport</keyword>
<keyword id="KW-0460">Magnesium</keyword>
<keyword id="KW-0472">Membrane</keyword>
<keyword id="KW-1185">Reference proteome</keyword>
<keyword id="KW-0812">Transmembrane</keyword>
<keyword id="KW-1133">Transmembrane helix</keyword>
<keyword id="KW-0813">Transport</keyword>
<name>CORA_CAMJE</name>
<organism>
    <name type="scientific">Campylobacter jejuni subsp. jejuni serotype O:2 (strain ATCC 700819 / NCTC 11168)</name>
    <dbReference type="NCBI Taxonomy" id="192222"/>
    <lineage>
        <taxon>Bacteria</taxon>
        <taxon>Pseudomonadati</taxon>
        <taxon>Campylobacterota</taxon>
        <taxon>Epsilonproteobacteria</taxon>
        <taxon>Campylobacterales</taxon>
        <taxon>Campylobacteraceae</taxon>
        <taxon>Campylobacter</taxon>
    </lineage>
</organism>
<feature type="chain" id="PRO_0000239091" description="Magnesium transport protein CorA">
    <location>
        <begin position="1"/>
        <end position="327"/>
    </location>
</feature>
<feature type="transmembrane region" description="Helical" evidence="4">
    <location>
        <begin position="269"/>
        <end position="289"/>
    </location>
</feature>
<feature type="transmembrane region" description="Helical" evidence="4">
    <location>
        <begin position="301"/>
        <end position="321"/>
    </location>
</feature>
<feature type="short sequence motif" description="Probable selectivity filter" evidence="3">
    <location>
        <begin position="288"/>
        <end position="290"/>
    </location>
</feature>
<feature type="site" description="Essential for ion permeation" evidence="3">
    <location>
        <position position="264"/>
    </location>
</feature>
<gene>
    <name type="primary">corA</name>
    <name type="ordered locus">Cj0726c</name>
</gene>
<reference key="1">
    <citation type="journal article" date="2000" name="Nature">
        <title>The genome sequence of the food-borne pathogen Campylobacter jejuni reveals hypervariable sequences.</title>
        <authorList>
            <person name="Parkhill J."/>
            <person name="Wren B.W."/>
            <person name="Mungall K.L."/>
            <person name="Ketley J.M."/>
            <person name="Churcher C.M."/>
            <person name="Basham D."/>
            <person name="Chillingworth T."/>
            <person name="Davies R.M."/>
            <person name="Feltwell T."/>
            <person name="Holroyd S."/>
            <person name="Jagels K."/>
            <person name="Karlyshev A.V."/>
            <person name="Moule S."/>
            <person name="Pallen M.J."/>
            <person name="Penn C.W."/>
            <person name="Quail M.A."/>
            <person name="Rajandream M.A."/>
            <person name="Rutherford K.M."/>
            <person name="van Vliet A.H.M."/>
            <person name="Whitehead S."/>
            <person name="Barrell B.G."/>
        </authorList>
    </citation>
    <scope>NUCLEOTIDE SEQUENCE [LARGE SCALE GENOMIC DNA]</scope>
    <source>
        <strain>ATCC 700819 / NCTC 11168</strain>
    </source>
</reference>
<evidence type="ECO:0000250" key="1">
    <source>
        <dbReference type="UniProtKB" id="P0ABI4"/>
    </source>
</evidence>
<evidence type="ECO:0000250" key="2">
    <source>
        <dbReference type="UniProtKB" id="Q7VRM7"/>
    </source>
</evidence>
<evidence type="ECO:0000250" key="3">
    <source>
        <dbReference type="UniProtKB" id="Q9WZ31"/>
    </source>
</evidence>
<evidence type="ECO:0000255" key="4"/>
<evidence type="ECO:0000305" key="5"/>
<proteinExistence type="evidence at protein level"/>
<accession>Q9PPI1</accession>
<accession>Q0PAF3</accession>
<protein>
    <recommendedName>
        <fullName>Magnesium transport protein CorA</fullName>
    </recommendedName>
</protein>